<dbReference type="EC" id="6.2.1.14" evidence="1"/>
<dbReference type="EMBL" id="CP001820">
    <property type="protein sequence ID" value="ACZ24687.1"/>
    <property type="molecule type" value="Genomic_DNA"/>
</dbReference>
<dbReference type="RefSeq" id="WP_012864431.1">
    <property type="nucleotide sequence ID" value="NC_013520.1"/>
</dbReference>
<dbReference type="SMR" id="D1BMT0"/>
<dbReference type="PaxDb" id="479436-Vpar_1006"/>
<dbReference type="GeneID" id="69653559"/>
<dbReference type="KEGG" id="vpr:Vpar_1006"/>
<dbReference type="PATRIC" id="fig|479436.6.peg.982"/>
<dbReference type="eggNOG" id="COG1424">
    <property type="taxonomic scope" value="Bacteria"/>
</dbReference>
<dbReference type="HOGENOM" id="CLU_076858_0_0_9"/>
<dbReference type="OrthoDB" id="9792985at2"/>
<dbReference type="UniPathway" id="UPA00999">
    <property type="reaction ID" value="UER00351"/>
</dbReference>
<dbReference type="GO" id="GO:0042410">
    <property type="term" value="F:6-carboxyhexanoate-CoA ligase activity"/>
    <property type="evidence" value="ECO:0007669"/>
    <property type="project" value="UniProtKB-UniRule"/>
</dbReference>
<dbReference type="GO" id="GO:0005524">
    <property type="term" value="F:ATP binding"/>
    <property type="evidence" value="ECO:0007669"/>
    <property type="project" value="UniProtKB-KW"/>
</dbReference>
<dbReference type="GO" id="GO:0000287">
    <property type="term" value="F:magnesium ion binding"/>
    <property type="evidence" value="ECO:0007669"/>
    <property type="project" value="UniProtKB-UniRule"/>
</dbReference>
<dbReference type="GO" id="GO:0009102">
    <property type="term" value="P:biotin biosynthetic process"/>
    <property type="evidence" value="ECO:0007669"/>
    <property type="project" value="UniProtKB-UniRule"/>
</dbReference>
<dbReference type="HAMAP" id="MF_00668">
    <property type="entry name" value="BioW"/>
    <property type="match status" value="1"/>
</dbReference>
<dbReference type="InterPro" id="IPR005499">
    <property type="entry name" value="BioW"/>
</dbReference>
<dbReference type="NCBIfam" id="TIGR01204">
    <property type="entry name" value="bioW"/>
    <property type="match status" value="1"/>
</dbReference>
<dbReference type="NCBIfam" id="NF002360">
    <property type="entry name" value="PRK01322.1"/>
    <property type="match status" value="1"/>
</dbReference>
<dbReference type="Pfam" id="PF03744">
    <property type="entry name" value="BioW"/>
    <property type="match status" value="1"/>
</dbReference>
<comment type="function">
    <text evidence="1">Catalyzes the transformation of pimelate into pimeloyl-CoA with concomitant hydrolysis of ATP to AMP.</text>
</comment>
<comment type="catalytic activity">
    <reaction evidence="1">
        <text>heptanedioate + ATP + CoA = 6-carboxyhexanoyl-CoA + AMP + diphosphate</text>
        <dbReference type="Rhea" id="RHEA:14781"/>
        <dbReference type="ChEBI" id="CHEBI:30616"/>
        <dbReference type="ChEBI" id="CHEBI:33019"/>
        <dbReference type="ChEBI" id="CHEBI:36165"/>
        <dbReference type="ChEBI" id="CHEBI:57287"/>
        <dbReference type="ChEBI" id="CHEBI:57360"/>
        <dbReference type="ChEBI" id="CHEBI:456215"/>
        <dbReference type="EC" id="6.2.1.14"/>
    </reaction>
</comment>
<comment type="cofactor">
    <cofactor evidence="1">
        <name>Mg(2+)</name>
        <dbReference type="ChEBI" id="CHEBI:18420"/>
    </cofactor>
</comment>
<comment type="pathway">
    <text evidence="1">Metabolic intermediate metabolism; pimeloyl-CoA biosynthesis; pimeloyl-CoA from pimelate: step 1/1.</text>
</comment>
<comment type="subunit">
    <text evidence="1">Homodimer.</text>
</comment>
<comment type="similarity">
    <text evidence="1">Belongs to the BioW family.</text>
</comment>
<evidence type="ECO:0000255" key="1">
    <source>
        <dbReference type="HAMAP-Rule" id="MF_00668"/>
    </source>
</evidence>
<proteinExistence type="inferred from homology"/>
<sequence>MDELYSVRMRAAQGGPHENGGHHISGAERIVTLNQVGFIAQSLAERALHHSKGTADFINITVDLIPSETITYIDCLKVKEHTANTVTEAHQLAVKLLQGTDISESAIRNSIFLLKSLVSSMRGAMLVDAISGERLDAGNRGVRVSHMDSFDSDKLGDNEHMREALVLASKVQSAEGIVGELCWSDDPDYTIGYVACNGVYHRIPNMKEIGSNLGGRVFFVKPNIDLEGVIEYLEKEPVLVQW</sequence>
<organism>
    <name type="scientific">Veillonella parvula (strain ATCC 10790 / DSM 2008 / CCUG 5123 / JCM 12972 / NCTC 11810 / Te3)</name>
    <name type="common">Veillonella alcalescens</name>
    <dbReference type="NCBI Taxonomy" id="479436"/>
    <lineage>
        <taxon>Bacteria</taxon>
        <taxon>Bacillati</taxon>
        <taxon>Bacillota</taxon>
        <taxon>Negativicutes</taxon>
        <taxon>Veillonellales</taxon>
        <taxon>Veillonellaceae</taxon>
        <taxon>Veillonella</taxon>
    </lineage>
</organism>
<keyword id="KW-0067">ATP-binding</keyword>
<keyword id="KW-0093">Biotin biosynthesis</keyword>
<keyword id="KW-0436">Ligase</keyword>
<keyword id="KW-0460">Magnesium</keyword>
<keyword id="KW-0547">Nucleotide-binding</keyword>
<protein>
    <recommendedName>
        <fullName evidence="1">6-carboxyhexanoate--CoA ligase</fullName>
        <ecNumber evidence="1">6.2.1.14</ecNumber>
    </recommendedName>
    <alternativeName>
        <fullName evidence="1">Pimeloyl-CoA synthase</fullName>
    </alternativeName>
</protein>
<reference key="1">
    <citation type="submission" date="2009-11" db="EMBL/GenBank/DDBJ databases">
        <title>The complete genome of Veillonella parvula DSM 2008.</title>
        <authorList>
            <consortium name="US DOE Joint Genome Institute (JGI-PGF)"/>
            <person name="Lucas S."/>
            <person name="Copeland A."/>
            <person name="Lapidus A."/>
            <person name="Glavina del Rio T."/>
            <person name="Dalin E."/>
            <person name="Tice H."/>
            <person name="Bruce D."/>
            <person name="Goodwin L."/>
            <person name="Pitluck S."/>
            <person name="Kyrpides N."/>
            <person name="Mavromatis K."/>
            <person name="Ivanova N."/>
            <person name="Mikhailova N."/>
            <person name="Saunders E."/>
            <person name="Brettin T."/>
            <person name="Detter J.C."/>
            <person name="Han C."/>
            <person name="Larimer F."/>
            <person name="Land M."/>
            <person name="Hauser L."/>
            <person name="Markowitz V."/>
            <person name="Cheng J.F."/>
            <person name="Hugenholtz P."/>
            <person name="Woyke T."/>
            <person name="Wu D."/>
            <person name="Wellnitz S."/>
            <person name="Schneider S."/>
            <person name="Gronow S."/>
            <person name="Klenk H.P."/>
            <person name="Eisen J.A."/>
        </authorList>
    </citation>
    <scope>NUCLEOTIDE SEQUENCE [LARGE SCALE GENOMIC DNA]</scope>
    <source>
        <strain>ATCC 10790 / DSM 2008 / CCUG 5123 / JCM 12972 / NCTC 11810 / Te3</strain>
    </source>
</reference>
<name>BIOW_VEIPT</name>
<feature type="chain" id="PRO_0000412093" description="6-carboxyhexanoate--CoA ligase">
    <location>
        <begin position="1"/>
        <end position="242"/>
    </location>
</feature>
<accession>D1BMT0</accession>
<gene>
    <name evidence="1" type="primary">bioW</name>
    <name type="ordered locus">Vpar_1006</name>
</gene>